<keyword id="KW-0007">Acetylation</keyword>
<keyword id="KW-0010">Activator</keyword>
<keyword id="KW-0025">Alternative splicing</keyword>
<keyword id="KW-0238">DNA-binding</keyword>
<keyword id="KW-1017">Isopeptide bond</keyword>
<keyword id="KW-0479">Metal-binding</keyword>
<keyword id="KW-0488">Methylation</keyword>
<keyword id="KW-0507">mRNA processing</keyword>
<keyword id="KW-0508">mRNA splicing</keyword>
<keyword id="KW-0539">Nucleus</keyword>
<keyword id="KW-0597">Phosphoprotein</keyword>
<keyword id="KW-1267">Proteomics identification</keyword>
<keyword id="KW-1185">Reference proteome</keyword>
<keyword id="KW-0677">Repeat</keyword>
<keyword id="KW-0804">Transcription</keyword>
<keyword id="KW-0805">Transcription regulation</keyword>
<keyword id="KW-0832">Ubl conjugation</keyword>
<keyword id="KW-0862">Zinc</keyword>
<keyword id="KW-0863">Zinc-finger</keyword>
<organism>
    <name type="scientific">Homo sapiens</name>
    <name type="common">Human</name>
    <dbReference type="NCBI Taxonomy" id="9606"/>
    <lineage>
        <taxon>Eukaryota</taxon>
        <taxon>Metazoa</taxon>
        <taxon>Chordata</taxon>
        <taxon>Craniata</taxon>
        <taxon>Vertebrata</taxon>
        <taxon>Euteleostomi</taxon>
        <taxon>Mammalia</taxon>
        <taxon>Eutheria</taxon>
        <taxon>Euarchontoglires</taxon>
        <taxon>Primates</taxon>
        <taxon>Haplorrhini</taxon>
        <taxon>Catarrhini</taxon>
        <taxon>Hominidae</taxon>
        <taxon>Homo</taxon>
    </lineage>
</organism>
<proteinExistence type="evidence at protein level"/>
<feature type="chain" id="PRO_0000075386" description="DBIRD complex subunit ZNF326">
    <location>
        <begin position="1"/>
        <end position="582"/>
    </location>
</feature>
<feature type="zinc finger region" description="C2H2 AKAP95-type 1" evidence="2">
    <location>
        <begin position="314"/>
        <end position="336"/>
    </location>
</feature>
<feature type="zinc finger region" description="C2H2 AKAP95-type 2" evidence="2">
    <location>
        <begin position="407"/>
        <end position="430"/>
    </location>
</feature>
<feature type="region of interest" description="Mediates transcriptional activation" evidence="1">
    <location>
        <begin position="1"/>
        <end position="124"/>
    </location>
</feature>
<feature type="region of interest" description="Disordered" evidence="3">
    <location>
        <begin position="154"/>
        <end position="194"/>
    </location>
</feature>
<feature type="region of interest" description="Disordered" evidence="3">
    <location>
        <begin position="243"/>
        <end position="302"/>
    </location>
</feature>
<feature type="region of interest" description="Disordered" evidence="3">
    <location>
        <begin position="472"/>
        <end position="582"/>
    </location>
</feature>
<feature type="short sequence motif" description="Bipartite nuclear localization signal" evidence="1">
    <location>
        <begin position="238"/>
        <end position="260"/>
    </location>
</feature>
<feature type="compositionally biased region" description="Basic and acidic residues" evidence="3">
    <location>
        <begin position="272"/>
        <end position="290"/>
    </location>
</feature>
<feature type="compositionally biased region" description="Acidic residues" evidence="3">
    <location>
        <begin position="483"/>
        <end position="523"/>
    </location>
</feature>
<feature type="compositionally biased region" description="Gly residues" evidence="3">
    <location>
        <begin position="530"/>
        <end position="545"/>
    </location>
</feature>
<feature type="compositionally biased region" description="Acidic residues" evidence="3">
    <location>
        <begin position="552"/>
        <end position="567"/>
    </location>
</feature>
<feature type="modified residue" description="Phosphoserine" evidence="12">
    <location>
        <position position="48"/>
    </location>
</feature>
<feature type="modified residue" description="Phosphoserine" evidence="12 14">
    <location>
        <position position="56"/>
    </location>
</feature>
<feature type="modified residue" description="Phosphoserine" evidence="12">
    <location>
        <position position="63"/>
    </location>
</feature>
<feature type="modified residue" description="Phosphoserine" evidence="14">
    <location>
        <position position="69"/>
    </location>
</feature>
<feature type="modified residue" description="Phosphoserine" evidence="12">
    <location>
        <position position="81"/>
    </location>
</feature>
<feature type="modified residue" description="Phosphoserine" evidence="12">
    <location>
        <position position="82"/>
    </location>
</feature>
<feature type="modified residue" description="Phosphoserine" evidence="12">
    <location>
        <position position="91"/>
    </location>
</feature>
<feature type="modified residue" description="Phosphoserine" evidence="11">
    <location>
        <position position="106"/>
    </location>
</feature>
<feature type="modified residue" description="Phosphoserine" evidence="12">
    <location>
        <position position="114"/>
    </location>
</feature>
<feature type="modified residue" description="Phosphoserine" evidence="12">
    <location>
        <position position="118"/>
    </location>
</feature>
<feature type="modified residue" description="Phosphoserine" evidence="11 12">
    <location>
        <position position="121"/>
    </location>
</feature>
<feature type="modified residue" description="Phosphoserine" evidence="8 10">
    <location>
        <position position="137"/>
    </location>
</feature>
<feature type="modified residue" description="Omega-N-methylarginine" evidence="13">
    <location>
        <position position="173"/>
    </location>
</feature>
<feature type="modified residue" description="Phosphoserine" evidence="12">
    <location>
        <position position="212"/>
    </location>
</feature>
<feature type="modified residue" description="Omega-N-methylarginine" evidence="13">
    <location>
        <position position="235"/>
    </location>
</feature>
<feature type="modified residue" description="N6-acetyllysine; alternate" evidence="9">
    <location>
        <position position="247"/>
    </location>
</feature>
<feature type="modified residue" description="Phosphoserine" evidence="12">
    <location>
        <position position="249"/>
    </location>
</feature>
<feature type="modified residue" description="Phosphothreonine" evidence="12">
    <location>
        <position position="251"/>
    </location>
</feature>
<feature type="modified residue" description="Phosphoserine" evidence="8 10 12 14">
    <location>
        <position position="270"/>
    </location>
</feature>
<feature type="cross-link" description="Glycyl lysine isopeptide (Lys-Gly) (interchain with G-Cter in SUMO2)" evidence="15">
    <location>
        <position position="140"/>
    </location>
</feature>
<feature type="cross-link" description="Glycyl lysine isopeptide (Lys-Gly) (interchain with G-Cter in SUMO2)" evidence="15">
    <location>
        <position position="240"/>
    </location>
</feature>
<feature type="cross-link" description="Glycyl lysine isopeptide (Lys-Gly) (interchain with G-Cter in SUMO2); alternate" evidence="15">
    <location>
        <position position="247"/>
    </location>
</feature>
<feature type="cross-link" description="Glycyl lysine isopeptide (Lys-Gly) (interchain with G-Cter in SUMO2)" evidence="15">
    <location>
        <position position="254"/>
    </location>
</feature>
<feature type="cross-link" description="Glycyl lysine isopeptide (Lys-Gly) (interchain with G-Cter in SUMO2)" evidence="15">
    <location>
        <position position="264"/>
    </location>
</feature>
<feature type="cross-link" description="Glycyl lysine isopeptide (Lys-Gly) (interchain with G-Cter in SUMO2)" evidence="15">
    <location>
        <position position="401"/>
    </location>
</feature>
<feature type="cross-link" description="Glycyl lysine isopeptide (Lys-Gly) (interchain with G-Cter in SUMO2)" evidence="15">
    <location>
        <position position="459"/>
    </location>
</feature>
<feature type="cross-link" description="Glycyl lysine isopeptide (Lys-Gly) (interchain with G-Cter in SUMO2)" evidence="15">
    <location>
        <position position="467"/>
    </location>
</feature>
<feature type="splice variant" id="VSP_043772" description="In isoform 3." evidence="5">
    <location>
        <begin position="1"/>
        <end position="206"/>
    </location>
</feature>
<feature type="splice variant" id="VSP_014956" description="In isoform 2." evidence="6">
    <location>
        <begin position="71"/>
        <end position="582"/>
    </location>
</feature>
<feature type="sequence conflict" description="In Ref. 4; AAH90866." evidence="7" ref="4">
    <original>P</original>
    <variation>S</variation>
    <location>
        <position position="471"/>
    </location>
</feature>
<accession>Q5BKZ1</accession>
<accession>A8MYX1</accession>
<accession>B4DLN0</accession>
<accession>B4E179</accession>
<accession>Q5VW93</accession>
<accession>Q5VW94</accession>
<accession>Q5VW96</accession>
<accession>Q5VW97</accession>
<accession>Q6NSA2</accession>
<accession>Q7Z638</accession>
<accession>Q7Z6C2</accession>
<comment type="function">
    <text evidence="4">Core component of the DBIRD complex, a multiprotein complex that acts at the interface between core mRNP particles and RNA polymerase II (RNAPII) and integrates transcript elongation with the regulation of alternative splicing: the DBIRD complex affects local transcript elongation rates and alternative splicing of a large set of exons embedded in (A + T)-rich DNA regions. May play a role in neuronal differentiation and is able to bind DNA and activate expression in vitro.</text>
</comment>
<comment type="subunit">
    <text evidence="4">Component of the DBIRD complex. Interacts with CCAR2; the interaction is direct.</text>
</comment>
<comment type="interaction">
    <interactant intactId="EBI-2560158">
        <id>Q5BKZ1</id>
    </interactant>
    <interactant intactId="EBI-3904864">
        <id>O60477</id>
        <label>BRINP1</label>
    </interactant>
    <organismsDiffer>false</organismsDiffer>
    <experiments>5</experiments>
</comment>
<comment type="interaction">
    <interactant intactId="EBI-2560158">
        <id>Q5BKZ1</id>
    </interactant>
    <interactant intactId="EBI-356700">
        <id>P57678</id>
        <label>GEMIN4</label>
    </interactant>
    <organismsDiffer>false</organismsDiffer>
    <experiments>3</experiments>
</comment>
<comment type="interaction">
    <interactant intactId="EBI-2560158">
        <id>Q5BKZ1</id>
    </interactant>
    <interactant intactId="EBI-740553">
        <id>P13807</id>
        <label>GYS1</label>
    </interactant>
    <organismsDiffer>false</organismsDiffer>
    <experiments>3</experiments>
</comment>
<comment type="interaction">
    <interactant intactId="EBI-2560158">
        <id>Q5BKZ1</id>
    </interactant>
    <interactant intactId="EBI-722504">
        <id>O75525</id>
        <label>KHDRBS3</label>
    </interactant>
    <organismsDiffer>false</organismsDiffer>
    <experiments>3</experiments>
</comment>
<comment type="interaction">
    <interactant intactId="EBI-2560158">
        <id>Q5BKZ1</id>
    </interactant>
    <interactant intactId="EBI-540602">
        <id>O15131</id>
        <label>KPNA5</label>
    </interactant>
    <organismsDiffer>false</organismsDiffer>
    <experiments>3</experiments>
</comment>
<comment type="interaction">
    <interactant intactId="EBI-2560158">
        <id>Q5BKZ1</id>
    </interactant>
    <interactant intactId="EBI-375617">
        <id>P02549</id>
        <label>SPTA1</label>
    </interactant>
    <organismsDiffer>false</organismsDiffer>
    <experiments>3</experiments>
</comment>
<comment type="interaction">
    <interactant intactId="EBI-2560158">
        <id>Q5BKZ1</id>
    </interactant>
    <interactant intactId="EBI-2803134">
        <id>Q2NL98</id>
        <label>VMAC</label>
    </interactant>
    <organismsDiffer>false</organismsDiffer>
    <experiments>3</experiments>
</comment>
<comment type="subcellular location">
    <subcellularLocation>
        <location evidence="1">Nucleus matrix</location>
    </subcellularLocation>
</comment>
<comment type="alternative products">
    <event type="alternative splicing"/>
    <isoform>
        <id>Q5BKZ1-1</id>
        <name>1</name>
        <sequence type="displayed"/>
    </isoform>
    <isoform>
        <id>Q5BKZ1-2</id>
        <name>2</name>
        <sequence type="described" ref="VSP_014956"/>
    </isoform>
    <isoform>
        <id>Q5BKZ1-3</id>
        <name>3</name>
        <sequence type="described" ref="VSP_043772"/>
    </isoform>
</comment>
<comment type="similarity">
    <text evidence="2">Belongs to the AKAP95 family.</text>
</comment>
<comment type="sequence caution" evidence="7">
    <conflict type="miscellaneous discrepancy">
        <sequence resource="EMBL-CDS" id="AAH52645"/>
    </conflict>
    <text>Contaminating sequence. Potential poly-A sequence.</text>
</comment>
<comment type="sequence caution" evidence="7">
    <conflict type="miscellaneous discrepancy">
        <sequence resource="EMBL-CDS" id="AAH70341"/>
    </conflict>
    <text>Contaminating sequence. Potential poly-A sequence.</text>
</comment>
<gene>
    <name type="primary">ZNF326</name>
    <name type="synonym">ZIRD</name>
</gene>
<reference key="1">
    <citation type="journal article" date="2004" name="Nat. Genet.">
        <title>Complete sequencing and characterization of 21,243 full-length human cDNAs.</title>
        <authorList>
            <person name="Ota T."/>
            <person name="Suzuki Y."/>
            <person name="Nishikawa T."/>
            <person name="Otsuki T."/>
            <person name="Sugiyama T."/>
            <person name="Irie R."/>
            <person name="Wakamatsu A."/>
            <person name="Hayashi K."/>
            <person name="Sato H."/>
            <person name="Nagai K."/>
            <person name="Kimura K."/>
            <person name="Makita H."/>
            <person name="Sekine M."/>
            <person name="Obayashi M."/>
            <person name="Nishi T."/>
            <person name="Shibahara T."/>
            <person name="Tanaka T."/>
            <person name="Ishii S."/>
            <person name="Yamamoto J."/>
            <person name="Saito K."/>
            <person name="Kawai Y."/>
            <person name="Isono Y."/>
            <person name="Nakamura Y."/>
            <person name="Nagahari K."/>
            <person name="Murakami K."/>
            <person name="Yasuda T."/>
            <person name="Iwayanagi T."/>
            <person name="Wagatsuma M."/>
            <person name="Shiratori A."/>
            <person name="Sudo H."/>
            <person name="Hosoiri T."/>
            <person name="Kaku Y."/>
            <person name="Kodaira H."/>
            <person name="Kondo H."/>
            <person name="Sugawara M."/>
            <person name="Takahashi M."/>
            <person name="Kanda K."/>
            <person name="Yokoi T."/>
            <person name="Furuya T."/>
            <person name="Kikkawa E."/>
            <person name="Omura Y."/>
            <person name="Abe K."/>
            <person name="Kamihara K."/>
            <person name="Katsuta N."/>
            <person name="Sato K."/>
            <person name="Tanikawa M."/>
            <person name="Yamazaki M."/>
            <person name="Ninomiya K."/>
            <person name="Ishibashi T."/>
            <person name="Yamashita H."/>
            <person name="Murakawa K."/>
            <person name="Fujimori K."/>
            <person name="Tanai H."/>
            <person name="Kimata M."/>
            <person name="Watanabe M."/>
            <person name="Hiraoka S."/>
            <person name="Chiba Y."/>
            <person name="Ishida S."/>
            <person name="Ono Y."/>
            <person name="Takiguchi S."/>
            <person name="Watanabe S."/>
            <person name="Yosida M."/>
            <person name="Hotuta T."/>
            <person name="Kusano J."/>
            <person name="Kanehori K."/>
            <person name="Takahashi-Fujii A."/>
            <person name="Hara H."/>
            <person name="Tanase T.-O."/>
            <person name="Nomura Y."/>
            <person name="Togiya S."/>
            <person name="Komai F."/>
            <person name="Hara R."/>
            <person name="Takeuchi K."/>
            <person name="Arita M."/>
            <person name="Imose N."/>
            <person name="Musashino K."/>
            <person name="Yuuki H."/>
            <person name="Oshima A."/>
            <person name="Sasaki N."/>
            <person name="Aotsuka S."/>
            <person name="Yoshikawa Y."/>
            <person name="Matsunawa H."/>
            <person name="Ichihara T."/>
            <person name="Shiohata N."/>
            <person name="Sano S."/>
            <person name="Moriya S."/>
            <person name="Momiyama H."/>
            <person name="Satoh N."/>
            <person name="Takami S."/>
            <person name="Terashima Y."/>
            <person name="Suzuki O."/>
            <person name="Nakagawa S."/>
            <person name="Senoh A."/>
            <person name="Mizoguchi H."/>
            <person name="Goto Y."/>
            <person name="Shimizu F."/>
            <person name="Wakebe H."/>
            <person name="Hishigaki H."/>
            <person name="Watanabe T."/>
            <person name="Sugiyama A."/>
            <person name="Takemoto M."/>
            <person name="Kawakami B."/>
            <person name="Yamazaki M."/>
            <person name="Watanabe K."/>
            <person name="Kumagai A."/>
            <person name="Itakura S."/>
            <person name="Fukuzumi Y."/>
            <person name="Fujimori Y."/>
            <person name="Komiyama M."/>
            <person name="Tashiro H."/>
            <person name="Tanigami A."/>
            <person name="Fujiwara T."/>
            <person name="Ono T."/>
            <person name="Yamada K."/>
            <person name="Fujii Y."/>
            <person name="Ozaki K."/>
            <person name="Hirao M."/>
            <person name="Ohmori Y."/>
            <person name="Kawabata A."/>
            <person name="Hikiji T."/>
            <person name="Kobatake N."/>
            <person name="Inagaki H."/>
            <person name="Ikema Y."/>
            <person name="Okamoto S."/>
            <person name="Okitani R."/>
            <person name="Kawakami T."/>
            <person name="Noguchi S."/>
            <person name="Itoh T."/>
            <person name="Shigeta K."/>
            <person name="Senba T."/>
            <person name="Matsumura K."/>
            <person name="Nakajima Y."/>
            <person name="Mizuno T."/>
            <person name="Morinaga M."/>
            <person name="Sasaki M."/>
            <person name="Togashi T."/>
            <person name="Oyama M."/>
            <person name="Hata H."/>
            <person name="Watanabe M."/>
            <person name="Komatsu T."/>
            <person name="Mizushima-Sugano J."/>
            <person name="Satoh T."/>
            <person name="Shirai Y."/>
            <person name="Takahashi Y."/>
            <person name="Nakagawa K."/>
            <person name="Okumura K."/>
            <person name="Nagase T."/>
            <person name="Nomura N."/>
            <person name="Kikuchi H."/>
            <person name="Masuho Y."/>
            <person name="Yamashita R."/>
            <person name="Nakai K."/>
            <person name="Yada T."/>
            <person name="Nakamura Y."/>
            <person name="Ohara O."/>
            <person name="Isogai T."/>
            <person name="Sugano S."/>
        </authorList>
    </citation>
    <scope>NUCLEOTIDE SEQUENCE [LARGE SCALE MRNA] (ISOFORMS 1 AND 3)</scope>
    <source>
        <tissue>Kidney</tissue>
        <tissue>Umbilical cord blood</tissue>
    </source>
</reference>
<reference key="2">
    <citation type="journal article" date="2006" name="Nature">
        <title>The DNA sequence and biological annotation of human chromosome 1.</title>
        <authorList>
            <person name="Gregory S.G."/>
            <person name="Barlow K.F."/>
            <person name="McLay K.E."/>
            <person name="Kaul R."/>
            <person name="Swarbreck D."/>
            <person name="Dunham A."/>
            <person name="Scott C.E."/>
            <person name="Howe K.L."/>
            <person name="Woodfine K."/>
            <person name="Spencer C.C.A."/>
            <person name="Jones M.C."/>
            <person name="Gillson C."/>
            <person name="Searle S."/>
            <person name="Zhou Y."/>
            <person name="Kokocinski F."/>
            <person name="McDonald L."/>
            <person name="Evans R."/>
            <person name="Phillips K."/>
            <person name="Atkinson A."/>
            <person name="Cooper R."/>
            <person name="Jones C."/>
            <person name="Hall R.E."/>
            <person name="Andrews T.D."/>
            <person name="Lloyd C."/>
            <person name="Ainscough R."/>
            <person name="Almeida J.P."/>
            <person name="Ambrose K.D."/>
            <person name="Anderson F."/>
            <person name="Andrew R.W."/>
            <person name="Ashwell R.I.S."/>
            <person name="Aubin K."/>
            <person name="Babbage A.K."/>
            <person name="Bagguley C.L."/>
            <person name="Bailey J."/>
            <person name="Beasley H."/>
            <person name="Bethel G."/>
            <person name="Bird C.P."/>
            <person name="Bray-Allen S."/>
            <person name="Brown J.Y."/>
            <person name="Brown A.J."/>
            <person name="Buckley D."/>
            <person name="Burton J."/>
            <person name="Bye J."/>
            <person name="Carder C."/>
            <person name="Chapman J.C."/>
            <person name="Clark S.Y."/>
            <person name="Clarke G."/>
            <person name="Clee C."/>
            <person name="Cobley V."/>
            <person name="Collier R.E."/>
            <person name="Corby N."/>
            <person name="Coville G.J."/>
            <person name="Davies J."/>
            <person name="Deadman R."/>
            <person name="Dunn M."/>
            <person name="Earthrowl M."/>
            <person name="Ellington A.G."/>
            <person name="Errington H."/>
            <person name="Frankish A."/>
            <person name="Frankland J."/>
            <person name="French L."/>
            <person name="Garner P."/>
            <person name="Garnett J."/>
            <person name="Gay L."/>
            <person name="Ghori M.R.J."/>
            <person name="Gibson R."/>
            <person name="Gilby L.M."/>
            <person name="Gillett W."/>
            <person name="Glithero R.J."/>
            <person name="Grafham D.V."/>
            <person name="Griffiths C."/>
            <person name="Griffiths-Jones S."/>
            <person name="Grocock R."/>
            <person name="Hammond S."/>
            <person name="Harrison E.S.I."/>
            <person name="Hart E."/>
            <person name="Haugen E."/>
            <person name="Heath P.D."/>
            <person name="Holmes S."/>
            <person name="Holt K."/>
            <person name="Howden P.J."/>
            <person name="Hunt A.R."/>
            <person name="Hunt S.E."/>
            <person name="Hunter G."/>
            <person name="Isherwood J."/>
            <person name="James R."/>
            <person name="Johnson C."/>
            <person name="Johnson D."/>
            <person name="Joy A."/>
            <person name="Kay M."/>
            <person name="Kershaw J.K."/>
            <person name="Kibukawa M."/>
            <person name="Kimberley A.M."/>
            <person name="King A."/>
            <person name="Knights A.J."/>
            <person name="Lad H."/>
            <person name="Laird G."/>
            <person name="Lawlor S."/>
            <person name="Leongamornlert D.A."/>
            <person name="Lloyd D.M."/>
            <person name="Loveland J."/>
            <person name="Lovell J."/>
            <person name="Lush M.J."/>
            <person name="Lyne R."/>
            <person name="Martin S."/>
            <person name="Mashreghi-Mohammadi M."/>
            <person name="Matthews L."/>
            <person name="Matthews N.S.W."/>
            <person name="McLaren S."/>
            <person name="Milne S."/>
            <person name="Mistry S."/>
            <person name="Moore M.J.F."/>
            <person name="Nickerson T."/>
            <person name="O'Dell C.N."/>
            <person name="Oliver K."/>
            <person name="Palmeiri A."/>
            <person name="Palmer S.A."/>
            <person name="Parker A."/>
            <person name="Patel D."/>
            <person name="Pearce A.V."/>
            <person name="Peck A.I."/>
            <person name="Pelan S."/>
            <person name="Phelps K."/>
            <person name="Phillimore B.J."/>
            <person name="Plumb R."/>
            <person name="Rajan J."/>
            <person name="Raymond C."/>
            <person name="Rouse G."/>
            <person name="Saenphimmachak C."/>
            <person name="Sehra H.K."/>
            <person name="Sheridan E."/>
            <person name="Shownkeen R."/>
            <person name="Sims S."/>
            <person name="Skuce C.D."/>
            <person name="Smith M."/>
            <person name="Steward C."/>
            <person name="Subramanian S."/>
            <person name="Sycamore N."/>
            <person name="Tracey A."/>
            <person name="Tromans A."/>
            <person name="Van Helmond Z."/>
            <person name="Wall M."/>
            <person name="Wallis J.M."/>
            <person name="White S."/>
            <person name="Whitehead S.L."/>
            <person name="Wilkinson J.E."/>
            <person name="Willey D.L."/>
            <person name="Williams H."/>
            <person name="Wilming L."/>
            <person name="Wray P.W."/>
            <person name="Wu Z."/>
            <person name="Coulson A."/>
            <person name="Vaudin M."/>
            <person name="Sulston J.E."/>
            <person name="Durbin R.M."/>
            <person name="Hubbard T."/>
            <person name="Wooster R."/>
            <person name="Dunham I."/>
            <person name="Carter N.P."/>
            <person name="McVean G."/>
            <person name="Ross M.T."/>
            <person name="Harrow J."/>
            <person name="Olson M.V."/>
            <person name="Beck S."/>
            <person name="Rogers J."/>
            <person name="Bentley D.R."/>
        </authorList>
    </citation>
    <scope>NUCLEOTIDE SEQUENCE [LARGE SCALE GENOMIC DNA]</scope>
</reference>
<reference key="3">
    <citation type="submission" date="2005-09" db="EMBL/GenBank/DDBJ databases">
        <authorList>
            <person name="Mural R.J."/>
            <person name="Istrail S."/>
            <person name="Sutton G.G."/>
            <person name="Florea L."/>
            <person name="Halpern A.L."/>
            <person name="Mobarry C.M."/>
            <person name="Lippert R."/>
            <person name="Walenz B."/>
            <person name="Shatkay H."/>
            <person name="Dew I."/>
            <person name="Miller J.R."/>
            <person name="Flanigan M.J."/>
            <person name="Edwards N.J."/>
            <person name="Bolanos R."/>
            <person name="Fasulo D."/>
            <person name="Halldorsson B.V."/>
            <person name="Hannenhalli S."/>
            <person name="Turner R."/>
            <person name="Yooseph S."/>
            <person name="Lu F."/>
            <person name="Nusskern D.R."/>
            <person name="Shue B.C."/>
            <person name="Zheng X.H."/>
            <person name="Zhong F."/>
            <person name="Delcher A.L."/>
            <person name="Huson D.H."/>
            <person name="Kravitz S.A."/>
            <person name="Mouchard L."/>
            <person name="Reinert K."/>
            <person name="Remington K.A."/>
            <person name="Clark A.G."/>
            <person name="Waterman M.S."/>
            <person name="Eichler E.E."/>
            <person name="Adams M.D."/>
            <person name="Hunkapiller M.W."/>
            <person name="Myers E.W."/>
            <person name="Venter J.C."/>
        </authorList>
    </citation>
    <scope>NUCLEOTIDE SEQUENCE [LARGE SCALE GENOMIC DNA]</scope>
</reference>
<reference key="4">
    <citation type="journal article" date="2004" name="Genome Res.">
        <title>The status, quality, and expansion of the NIH full-length cDNA project: the Mammalian Gene Collection (MGC).</title>
        <authorList>
            <consortium name="The MGC Project Team"/>
        </authorList>
    </citation>
    <scope>NUCLEOTIDE SEQUENCE [LARGE SCALE MRNA] (ISOFORMS 1 AND 2)</scope>
    <source>
        <tissue>Bone marrow</tissue>
        <tissue>Testis</tissue>
        <tissue>Uterus</tissue>
    </source>
</reference>
<reference key="5">
    <citation type="journal article" date="2006" name="Cell">
        <title>Global, in vivo, and site-specific phosphorylation dynamics in signaling networks.</title>
        <authorList>
            <person name="Olsen J.V."/>
            <person name="Blagoev B."/>
            <person name="Gnad F."/>
            <person name="Macek B."/>
            <person name="Kumar C."/>
            <person name="Mortensen P."/>
            <person name="Mann M."/>
        </authorList>
    </citation>
    <scope>IDENTIFICATION BY MASS SPECTROMETRY [LARGE SCALE ANALYSIS]</scope>
    <source>
        <tissue>Cervix carcinoma</tissue>
    </source>
</reference>
<reference key="6">
    <citation type="journal article" date="2008" name="Mol. Cell">
        <title>Kinase-selective enrichment enables quantitative phosphoproteomics of the kinome across the cell cycle.</title>
        <authorList>
            <person name="Daub H."/>
            <person name="Olsen J.V."/>
            <person name="Bairlein M."/>
            <person name="Gnad F."/>
            <person name="Oppermann F.S."/>
            <person name="Korner R."/>
            <person name="Greff Z."/>
            <person name="Keri G."/>
            <person name="Stemmann O."/>
            <person name="Mann M."/>
        </authorList>
    </citation>
    <scope>IDENTIFICATION BY MASS SPECTROMETRY [LARGE SCALE ANALYSIS]</scope>
    <source>
        <tissue>Cervix carcinoma</tissue>
    </source>
</reference>
<reference key="7">
    <citation type="journal article" date="2008" name="Proc. Natl. Acad. Sci. U.S.A.">
        <title>A quantitative atlas of mitotic phosphorylation.</title>
        <authorList>
            <person name="Dephoure N."/>
            <person name="Zhou C."/>
            <person name="Villen J."/>
            <person name="Beausoleil S.A."/>
            <person name="Bakalarski C.E."/>
            <person name="Elledge S.J."/>
            <person name="Gygi S.P."/>
        </authorList>
    </citation>
    <scope>PHOSPHORYLATION [LARGE SCALE ANALYSIS] AT SER-137 AND SER-270</scope>
    <scope>IDENTIFICATION BY MASS SPECTROMETRY [LARGE SCALE ANALYSIS]</scope>
    <source>
        <tissue>Cervix carcinoma</tissue>
    </source>
</reference>
<reference key="8">
    <citation type="journal article" date="2009" name="Science">
        <title>Lysine acetylation targets protein complexes and co-regulates major cellular functions.</title>
        <authorList>
            <person name="Choudhary C."/>
            <person name="Kumar C."/>
            <person name="Gnad F."/>
            <person name="Nielsen M.L."/>
            <person name="Rehman M."/>
            <person name="Walther T.C."/>
            <person name="Olsen J.V."/>
            <person name="Mann M."/>
        </authorList>
    </citation>
    <scope>ACETYLATION [LARGE SCALE ANALYSIS] AT LYS-247</scope>
    <scope>IDENTIFICATION BY MASS SPECTROMETRY [LARGE SCALE ANALYSIS]</scope>
</reference>
<reference key="9">
    <citation type="journal article" date="2010" name="Sci. Signal.">
        <title>Quantitative phosphoproteomics reveals widespread full phosphorylation site occupancy during mitosis.</title>
        <authorList>
            <person name="Olsen J.V."/>
            <person name="Vermeulen M."/>
            <person name="Santamaria A."/>
            <person name="Kumar C."/>
            <person name="Miller M.L."/>
            <person name="Jensen L.J."/>
            <person name="Gnad F."/>
            <person name="Cox J."/>
            <person name="Jensen T.S."/>
            <person name="Nigg E.A."/>
            <person name="Brunak S."/>
            <person name="Mann M."/>
        </authorList>
    </citation>
    <scope>PHOSPHORYLATION [LARGE SCALE ANALYSIS] AT SER-137 AND SER-270</scope>
    <scope>IDENTIFICATION BY MASS SPECTROMETRY [LARGE SCALE ANALYSIS]</scope>
    <source>
        <tissue>Cervix carcinoma</tissue>
    </source>
</reference>
<reference key="10">
    <citation type="journal article" date="2011" name="BMC Syst. Biol.">
        <title>Initial characterization of the human central proteome.</title>
        <authorList>
            <person name="Burkard T.R."/>
            <person name="Planyavsky M."/>
            <person name="Kaupe I."/>
            <person name="Breitwieser F.P."/>
            <person name="Buerckstuemmer T."/>
            <person name="Bennett K.L."/>
            <person name="Superti-Furga G."/>
            <person name="Colinge J."/>
        </authorList>
    </citation>
    <scope>IDENTIFICATION BY MASS SPECTROMETRY [LARGE SCALE ANALYSIS]</scope>
</reference>
<reference key="11">
    <citation type="journal article" date="2011" name="Sci. Signal.">
        <title>System-wide temporal characterization of the proteome and phosphoproteome of human embryonic stem cell differentiation.</title>
        <authorList>
            <person name="Rigbolt K.T."/>
            <person name="Prokhorova T.A."/>
            <person name="Akimov V."/>
            <person name="Henningsen J."/>
            <person name="Johansen P.T."/>
            <person name="Kratchmarova I."/>
            <person name="Kassem M."/>
            <person name="Mann M."/>
            <person name="Olsen J.V."/>
            <person name="Blagoev B."/>
        </authorList>
    </citation>
    <scope>PHOSPHORYLATION [LARGE SCALE ANALYSIS] AT SER-106 AND SER-121</scope>
    <scope>IDENTIFICATION BY MASS SPECTROMETRY [LARGE SCALE ANALYSIS]</scope>
</reference>
<reference key="12">
    <citation type="journal article" date="2012" name="Nature">
        <title>DBIRD complex integrates alternative mRNA splicing with RNA polymerase II transcript elongation.</title>
        <authorList>
            <person name="Close P."/>
            <person name="East P."/>
            <person name="Dirac-Svejstrup A.B."/>
            <person name="Hartmann H."/>
            <person name="Heron M."/>
            <person name="Maslen S."/>
            <person name="Chariot A."/>
            <person name="Soding J."/>
            <person name="Skehel M."/>
            <person name="Svejstrup J.Q."/>
        </authorList>
    </citation>
    <scope>IDENTIFICATION IN THE DBIRD COMPLEX</scope>
    <scope>FUNCTION</scope>
    <scope>INTERACTION WITH CCAR2</scope>
</reference>
<reference key="13">
    <citation type="journal article" date="2013" name="J. Proteome Res.">
        <title>Toward a comprehensive characterization of a human cancer cell phosphoproteome.</title>
        <authorList>
            <person name="Zhou H."/>
            <person name="Di Palma S."/>
            <person name="Preisinger C."/>
            <person name="Peng M."/>
            <person name="Polat A.N."/>
            <person name="Heck A.J."/>
            <person name="Mohammed S."/>
        </authorList>
    </citation>
    <scope>PHOSPHORYLATION [LARGE SCALE ANALYSIS] AT SER-48; SER-56; SER-63; SER-81; SER-82; SER-91; SER-114; SER-118; SER-121; SER-212; SER-249; THR-251 AND SER-270</scope>
    <scope>IDENTIFICATION BY MASS SPECTROMETRY [LARGE SCALE ANALYSIS]</scope>
    <source>
        <tissue>Cervix carcinoma</tissue>
        <tissue>Erythroleukemia</tissue>
    </source>
</reference>
<reference key="14">
    <citation type="journal article" date="2014" name="J. Proteomics">
        <title>An enzyme assisted RP-RPLC approach for in-depth analysis of human liver phosphoproteome.</title>
        <authorList>
            <person name="Bian Y."/>
            <person name="Song C."/>
            <person name="Cheng K."/>
            <person name="Dong M."/>
            <person name="Wang F."/>
            <person name="Huang J."/>
            <person name="Sun D."/>
            <person name="Wang L."/>
            <person name="Ye M."/>
            <person name="Zou H."/>
        </authorList>
    </citation>
    <scope>PHOSPHORYLATION [LARGE SCALE ANALYSIS] AT SER-56; SER-69 AND SER-270</scope>
    <scope>IDENTIFICATION BY MASS SPECTROMETRY [LARGE SCALE ANALYSIS]</scope>
    <source>
        <tissue>Liver</tissue>
    </source>
</reference>
<reference key="15">
    <citation type="journal article" date="2014" name="Mol. Cell. Proteomics">
        <title>Immunoaffinity enrichment and mass spectrometry analysis of protein methylation.</title>
        <authorList>
            <person name="Guo A."/>
            <person name="Gu H."/>
            <person name="Zhou J."/>
            <person name="Mulhern D."/>
            <person name="Wang Y."/>
            <person name="Lee K.A."/>
            <person name="Yang V."/>
            <person name="Aguiar M."/>
            <person name="Kornhauser J."/>
            <person name="Jia X."/>
            <person name="Ren J."/>
            <person name="Beausoleil S.A."/>
            <person name="Silva J.C."/>
            <person name="Vemulapalli V."/>
            <person name="Bedford M.T."/>
            <person name="Comb M.J."/>
        </authorList>
    </citation>
    <scope>METHYLATION [LARGE SCALE ANALYSIS] AT ARG-173 AND ARG-235</scope>
    <scope>IDENTIFICATION BY MASS SPECTROMETRY [LARGE SCALE ANALYSIS]</scope>
    <source>
        <tissue>Colon carcinoma</tissue>
    </source>
</reference>
<reference key="16">
    <citation type="journal article" date="2017" name="Nat. Struct. Mol. Biol.">
        <title>Site-specific mapping of the human SUMO proteome reveals co-modification with phosphorylation.</title>
        <authorList>
            <person name="Hendriks I.A."/>
            <person name="Lyon D."/>
            <person name="Young C."/>
            <person name="Jensen L.J."/>
            <person name="Vertegaal A.C."/>
            <person name="Nielsen M.L."/>
        </authorList>
    </citation>
    <scope>SUMOYLATION [LARGE SCALE ANALYSIS] AT LYS-140; LYS-240; LYS-247; LYS-254; LYS-264; LYS-401; LYS-459 AND LYS-467</scope>
    <scope>IDENTIFICATION BY MASS SPECTROMETRY [LARGE SCALE ANALYSIS]</scope>
</reference>
<evidence type="ECO:0000250" key="1"/>
<evidence type="ECO:0000255" key="2">
    <source>
        <dbReference type="PROSITE-ProRule" id="PRU01140"/>
    </source>
</evidence>
<evidence type="ECO:0000256" key="3">
    <source>
        <dbReference type="SAM" id="MobiDB-lite"/>
    </source>
</evidence>
<evidence type="ECO:0000269" key="4">
    <source>
    </source>
</evidence>
<evidence type="ECO:0000303" key="5">
    <source>
    </source>
</evidence>
<evidence type="ECO:0000303" key="6">
    <source>
    </source>
</evidence>
<evidence type="ECO:0000305" key="7"/>
<evidence type="ECO:0007744" key="8">
    <source>
    </source>
</evidence>
<evidence type="ECO:0007744" key="9">
    <source>
    </source>
</evidence>
<evidence type="ECO:0007744" key="10">
    <source>
    </source>
</evidence>
<evidence type="ECO:0007744" key="11">
    <source>
    </source>
</evidence>
<evidence type="ECO:0007744" key="12">
    <source>
    </source>
</evidence>
<evidence type="ECO:0007744" key="13">
    <source>
    </source>
</evidence>
<evidence type="ECO:0007744" key="14">
    <source>
    </source>
</evidence>
<evidence type="ECO:0007744" key="15">
    <source>
    </source>
</evidence>
<protein>
    <recommendedName>
        <fullName>DBIRD complex subunit ZNF326</fullName>
    </recommendedName>
    <alternativeName>
        <fullName>Zinc finger protein 326</fullName>
    </alternativeName>
    <alternativeName>
        <fullName>Zinc finger protein interacting with mRNPs and DBC1</fullName>
    </alternativeName>
</protein>
<sequence length="582" mass="65654">MDFEDDYTHSACRNTYQGFNGMDRDYGPGSYGGMDRDYGHGSYGGQRSMDSYLNQSYGMDNHSGGGGGSRFGPYESYDSRSSLGGRDLYRSGYGFNEPEQSRFGGSYGGRFESSYRNSLDSFGGRNQGGSSWEAPYSRSKLRPGFMEDRGRENYSSYSSFSSPHMKPAPVGSRGRGTPAYPESTFGSRNYDAFGGPSTGRGRGRGHMGDFGSIHRPGIVVDYQNKSTNVTVAAARGIKRKMMQPFNKPSGTFIKKPKLAKPMEKISLSKSPTKTDPKNEEEEKRRIEARREKQRRRREKNSEKYGDGYRMAFTCSFCKFRTFEEKDIELHLESSSHQETLDHIQKQTKFDKVVMEFLHECMVNKFKKTSIRKQQTNNQTEVVKIIEKDVMEGVTVDDHMMKVETVHCSACSVYIPALHSSVQQHLKSPDHIKGKQAYKEQIKRESVLTATSILNNPIVKARYERFVKGENPFEIQDHSQDQQIEGDEEDEEKIDEPIEEEEDEDEEEEAEEVGEVEEVEEVEEVREGGIEGEGNIQGVGEGGEVGVVGEVEGVGEVEEVEELEEETAKEEPADFPVEQPEEN</sequence>
<name>ZN326_HUMAN</name>
<dbReference type="EMBL" id="AK297073">
    <property type="protein sequence ID" value="BAG59592.1"/>
    <property type="molecule type" value="mRNA"/>
</dbReference>
<dbReference type="EMBL" id="AK303707">
    <property type="protein sequence ID" value="BAG64691.1"/>
    <property type="molecule type" value="mRNA"/>
</dbReference>
<dbReference type="EMBL" id="AL161797">
    <property type="status" value="NOT_ANNOTATED_CDS"/>
    <property type="molecule type" value="Genomic_DNA"/>
</dbReference>
<dbReference type="EMBL" id="AL391497">
    <property type="status" value="NOT_ANNOTATED_CDS"/>
    <property type="molecule type" value="Genomic_DNA"/>
</dbReference>
<dbReference type="EMBL" id="CH471097">
    <property type="protein sequence ID" value="EAW73125.1"/>
    <property type="molecule type" value="Genomic_DNA"/>
</dbReference>
<dbReference type="EMBL" id="CH471097">
    <property type="protein sequence ID" value="EAW73128.1"/>
    <property type="molecule type" value="Genomic_DNA"/>
</dbReference>
<dbReference type="EMBL" id="BC052645">
    <property type="protein sequence ID" value="AAH52645.1"/>
    <property type="status" value="ALT_SEQ"/>
    <property type="molecule type" value="mRNA"/>
</dbReference>
<dbReference type="EMBL" id="BC053888">
    <property type="protein sequence ID" value="AAH53888.1"/>
    <property type="molecule type" value="mRNA"/>
</dbReference>
<dbReference type="EMBL" id="BC070341">
    <property type="protein sequence ID" value="AAH70341.1"/>
    <property type="status" value="ALT_SEQ"/>
    <property type="molecule type" value="mRNA"/>
</dbReference>
<dbReference type="EMBL" id="BC090866">
    <property type="protein sequence ID" value="AAH90866.1"/>
    <property type="molecule type" value="mRNA"/>
</dbReference>
<dbReference type="CCDS" id="CCDS727.1">
    <molecule id="Q5BKZ1-1"/>
</dbReference>
<dbReference type="CCDS" id="CCDS728.1">
    <molecule id="Q5BKZ1-2"/>
</dbReference>
<dbReference type="RefSeq" id="NP_001307114.1">
    <property type="nucleotide sequence ID" value="NM_001320185.1"/>
</dbReference>
<dbReference type="RefSeq" id="NP_861446.2">
    <molecule id="Q5BKZ1-3"/>
    <property type="nucleotide sequence ID" value="NM_181781.3"/>
</dbReference>
<dbReference type="RefSeq" id="NP_892020.1">
    <molecule id="Q5BKZ1-2"/>
    <property type="nucleotide sequence ID" value="NM_182975.4"/>
</dbReference>
<dbReference type="RefSeq" id="NP_892021.1">
    <molecule id="Q5BKZ1-1"/>
    <property type="nucleotide sequence ID" value="NM_182976.4"/>
</dbReference>
<dbReference type="RefSeq" id="XP_005270836.1">
    <property type="nucleotide sequence ID" value="XM_005270779.4"/>
</dbReference>
<dbReference type="RefSeq" id="XP_011539592.1">
    <property type="nucleotide sequence ID" value="XM_011541290.2"/>
</dbReference>
<dbReference type="RefSeq" id="XP_047274393.1">
    <molecule id="Q5BKZ1-3"/>
    <property type="nucleotide sequence ID" value="XM_047418437.1"/>
</dbReference>
<dbReference type="RefSeq" id="XP_054192116.1">
    <molecule id="Q5BKZ1-3"/>
    <property type="nucleotide sequence ID" value="XM_054336141.1"/>
</dbReference>
<dbReference type="RefSeq" id="XP_054192117.1">
    <molecule id="Q5BKZ1-3"/>
    <property type="nucleotide sequence ID" value="XM_054336142.1"/>
</dbReference>
<dbReference type="SMR" id="Q5BKZ1"/>
<dbReference type="BioGRID" id="129936">
    <property type="interactions" value="232"/>
</dbReference>
<dbReference type="ComplexPortal" id="CPX-2645">
    <property type="entry name" value="DBIRD complex"/>
</dbReference>
<dbReference type="CORUM" id="Q5BKZ1"/>
<dbReference type="FunCoup" id="Q5BKZ1">
    <property type="interactions" value="2553"/>
</dbReference>
<dbReference type="IntAct" id="Q5BKZ1">
    <property type="interactions" value="138"/>
</dbReference>
<dbReference type="MINT" id="Q5BKZ1"/>
<dbReference type="STRING" id="9606.ENSP00000340796"/>
<dbReference type="GlyGen" id="Q5BKZ1">
    <property type="glycosylation" value="2 sites, 1 O-linked glycan (2 sites)"/>
</dbReference>
<dbReference type="iPTMnet" id="Q5BKZ1"/>
<dbReference type="PhosphoSitePlus" id="Q5BKZ1"/>
<dbReference type="SwissPalm" id="Q5BKZ1"/>
<dbReference type="BioMuta" id="ZNF326"/>
<dbReference type="DMDM" id="73622105"/>
<dbReference type="jPOST" id="Q5BKZ1"/>
<dbReference type="MassIVE" id="Q5BKZ1"/>
<dbReference type="PaxDb" id="9606-ENSP00000340796"/>
<dbReference type="PeptideAtlas" id="Q5BKZ1"/>
<dbReference type="ProteomicsDB" id="62713">
    <molecule id="Q5BKZ1-1"/>
</dbReference>
<dbReference type="ProteomicsDB" id="62714">
    <molecule id="Q5BKZ1-2"/>
</dbReference>
<dbReference type="ProteomicsDB" id="62715">
    <molecule id="Q5BKZ1-3"/>
</dbReference>
<dbReference type="Pumba" id="Q5BKZ1"/>
<dbReference type="Antibodypedia" id="19855">
    <property type="antibodies" value="143 antibodies from 23 providers"/>
</dbReference>
<dbReference type="DNASU" id="284695"/>
<dbReference type="Ensembl" id="ENST00000340281.9">
    <molecule id="Q5BKZ1-1"/>
    <property type="protein sequence ID" value="ENSP00000340796.4"/>
    <property type="gene ID" value="ENSG00000162664.17"/>
</dbReference>
<dbReference type="Ensembl" id="ENST00000361911.9">
    <molecule id="Q5BKZ1-2"/>
    <property type="protein sequence ID" value="ENSP00000355318.5"/>
    <property type="gene ID" value="ENSG00000162664.17"/>
</dbReference>
<dbReference type="GeneID" id="284695"/>
<dbReference type="KEGG" id="hsa:284695"/>
<dbReference type="MANE-Select" id="ENST00000340281.9">
    <property type="protein sequence ID" value="ENSP00000340796.4"/>
    <property type="RefSeq nucleotide sequence ID" value="NM_182976.4"/>
    <property type="RefSeq protein sequence ID" value="NP_892021.1"/>
</dbReference>
<dbReference type="UCSC" id="uc001dnp.5">
    <molecule id="Q5BKZ1-1"/>
    <property type="organism name" value="human"/>
</dbReference>
<dbReference type="AGR" id="HGNC:14104"/>
<dbReference type="CTD" id="284695"/>
<dbReference type="DisGeNET" id="284695"/>
<dbReference type="GeneCards" id="ZNF326"/>
<dbReference type="HGNC" id="HGNC:14104">
    <property type="gene designation" value="ZNF326"/>
</dbReference>
<dbReference type="HPA" id="ENSG00000162664">
    <property type="expression patterns" value="Tissue enhanced (retina)"/>
</dbReference>
<dbReference type="MIM" id="614601">
    <property type="type" value="gene"/>
</dbReference>
<dbReference type="neXtProt" id="NX_Q5BKZ1"/>
<dbReference type="OpenTargets" id="ENSG00000162664"/>
<dbReference type="PharmGKB" id="PA37842"/>
<dbReference type="VEuPathDB" id="HostDB:ENSG00000162664"/>
<dbReference type="eggNOG" id="ENOG502QUAZ">
    <property type="taxonomic scope" value="Eukaryota"/>
</dbReference>
<dbReference type="GeneTree" id="ENSGT00530000063777"/>
<dbReference type="HOGENOM" id="CLU_024193_2_0_1"/>
<dbReference type="InParanoid" id="Q5BKZ1"/>
<dbReference type="OMA" id="DDYTHSC"/>
<dbReference type="OrthoDB" id="9904304at2759"/>
<dbReference type="PAN-GO" id="Q5BKZ1">
    <property type="GO annotations" value="3 GO annotations based on evolutionary models"/>
</dbReference>
<dbReference type="PhylomeDB" id="Q5BKZ1"/>
<dbReference type="TreeFam" id="TF105407"/>
<dbReference type="PathwayCommons" id="Q5BKZ1"/>
<dbReference type="SignaLink" id="Q5BKZ1"/>
<dbReference type="BioGRID-ORCS" id="284695">
    <property type="hits" value="17 hits in 1159 CRISPR screens"/>
</dbReference>
<dbReference type="CD-CODE" id="232F8A39">
    <property type="entry name" value="P-body"/>
</dbReference>
<dbReference type="CD-CODE" id="91857CE7">
    <property type="entry name" value="Nucleolus"/>
</dbReference>
<dbReference type="ChiTaRS" id="ZNF326">
    <property type="organism name" value="human"/>
</dbReference>
<dbReference type="GenomeRNAi" id="284695"/>
<dbReference type="Pharos" id="Q5BKZ1">
    <property type="development level" value="Tbio"/>
</dbReference>
<dbReference type="PRO" id="PR:Q5BKZ1"/>
<dbReference type="Proteomes" id="UP000005640">
    <property type="component" value="Chromosome 1"/>
</dbReference>
<dbReference type="RNAct" id="Q5BKZ1">
    <property type="molecule type" value="protein"/>
</dbReference>
<dbReference type="Bgee" id="ENSG00000162664">
    <property type="expression patterns" value="Expressed in sural nerve and 187 other cell types or tissues"/>
</dbReference>
<dbReference type="ExpressionAtlas" id="Q5BKZ1">
    <property type="expression patterns" value="baseline and differential"/>
</dbReference>
<dbReference type="GO" id="GO:0044609">
    <property type="term" value="C:DBIRD complex"/>
    <property type="evidence" value="ECO:0000314"/>
    <property type="project" value="UniProtKB"/>
</dbReference>
<dbReference type="GO" id="GO:0043231">
    <property type="term" value="C:intracellular membrane-bounded organelle"/>
    <property type="evidence" value="ECO:0000314"/>
    <property type="project" value="HPA"/>
</dbReference>
<dbReference type="GO" id="GO:0016363">
    <property type="term" value="C:nuclear matrix"/>
    <property type="evidence" value="ECO:0007669"/>
    <property type="project" value="UniProtKB-SubCell"/>
</dbReference>
<dbReference type="GO" id="GO:0005654">
    <property type="term" value="C:nucleoplasm"/>
    <property type="evidence" value="ECO:0000314"/>
    <property type="project" value="HPA"/>
</dbReference>
<dbReference type="GO" id="GO:0005634">
    <property type="term" value="C:nucleus"/>
    <property type="evidence" value="ECO:0000318"/>
    <property type="project" value="GO_Central"/>
</dbReference>
<dbReference type="GO" id="GO:0003677">
    <property type="term" value="F:DNA binding"/>
    <property type="evidence" value="ECO:0007669"/>
    <property type="project" value="UniProtKB-KW"/>
</dbReference>
<dbReference type="GO" id="GO:0003723">
    <property type="term" value="F:RNA binding"/>
    <property type="evidence" value="ECO:0007005"/>
    <property type="project" value="UniProtKB"/>
</dbReference>
<dbReference type="GO" id="GO:0000993">
    <property type="term" value="F:RNA polymerase II complex binding"/>
    <property type="evidence" value="ECO:0000314"/>
    <property type="project" value="UniProtKB"/>
</dbReference>
<dbReference type="GO" id="GO:0008270">
    <property type="term" value="F:zinc ion binding"/>
    <property type="evidence" value="ECO:0007669"/>
    <property type="project" value="UniProtKB-KW"/>
</dbReference>
<dbReference type="GO" id="GO:0006397">
    <property type="term" value="P:mRNA processing"/>
    <property type="evidence" value="ECO:0007669"/>
    <property type="project" value="UniProtKB-KW"/>
</dbReference>
<dbReference type="GO" id="GO:0032784">
    <property type="term" value="P:regulation of DNA-templated transcription elongation"/>
    <property type="evidence" value="ECO:0000315"/>
    <property type="project" value="UniProtKB"/>
</dbReference>
<dbReference type="GO" id="GO:0043484">
    <property type="term" value="P:regulation of RNA splicing"/>
    <property type="evidence" value="ECO:0000315"/>
    <property type="project" value="UniProtKB"/>
</dbReference>
<dbReference type="GO" id="GO:0008380">
    <property type="term" value="P:RNA splicing"/>
    <property type="evidence" value="ECO:0007669"/>
    <property type="project" value="UniProtKB-KW"/>
</dbReference>
<dbReference type="InterPro" id="IPR007071">
    <property type="entry name" value="AKAP95"/>
</dbReference>
<dbReference type="InterPro" id="IPR034736">
    <property type="entry name" value="ZF_C2H2_AKAP95"/>
</dbReference>
<dbReference type="PANTHER" id="PTHR12190">
    <property type="entry name" value="A-KINASE ANCHOR PROTEIN AKAP 8"/>
    <property type="match status" value="1"/>
</dbReference>
<dbReference type="PANTHER" id="PTHR12190:SF1">
    <property type="entry name" value="DBIRD COMPLEX SUBUNIT ZNF326"/>
    <property type="match status" value="1"/>
</dbReference>
<dbReference type="Pfam" id="PF04988">
    <property type="entry name" value="AKAP95"/>
    <property type="match status" value="1"/>
</dbReference>
<dbReference type="PROSITE" id="PS51799">
    <property type="entry name" value="ZF_C2H2_AKAP95"/>
    <property type="match status" value="2"/>
</dbReference>